<sequence>MAGAEDGPGQQPELEDDEAASCRRWGAQHAGARELAALYSPGKRFQEWCCVVLCFSLIAHNMAHLLLLARWEHTPLVMLGMVAGALLADFLSGLVHWGADTWGSVELPIVGKAFIRPFREHHIDPTAITRHDFIETNGDNCLLTLLPLLNMAYKFRTQSPEVLEQLYPWECFVFCLIIFGTFTNQIHKWSHTYFGLPCWVVFLQDWHVILPRKHHRIHHVSPHETYFCITTGWLNYPLERMGFWRRLEDIIQALTGEKPRADDMKWAQKIK</sequence>
<gene>
    <name evidence="1" type="primary">PEDS1</name>
    <name evidence="1" type="synonym">PEDS</name>
    <name evidence="1" type="synonym">TMEM189</name>
</gene>
<comment type="function">
    <text evidence="1">Plasmanylethanolamine desaturase involved in plasmalogen biogenesis in the endoplasmic reticulum membrane. Plasmalogens are glycerophospholipids with a hydrocarbon chain linked by a vinyl ether bond at the glycerol sn-1 position, and are involved in antioxidative and signaling mechanisms.</text>
</comment>
<comment type="catalytic activity">
    <reaction evidence="1">
        <text>a 1-(1,2-saturated alkyl)-2-acyl-sn-glycero-3-phosphoethanolamine + 2 Fe(II)-[cytochrome b5] + O2 + 2 H(+) = a 1-O-(1Z-alkenyl)-2-acyl-sn-glycero-3-phosphoethanolamine + 2 Fe(III)-[cytochrome b5] + 2 H2O</text>
        <dbReference type="Rhea" id="RHEA:22956"/>
        <dbReference type="Rhea" id="RHEA-COMP:10438"/>
        <dbReference type="Rhea" id="RHEA-COMP:10439"/>
        <dbReference type="ChEBI" id="CHEBI:15377"/>
        <dbReference type="ChEBI" id="CHEBI:15378"/>
        <dbReference type="ChEBI" id="CHEBI:15379"/>
        <dbReference type="ChEBI" id="CHEBI:29033"/>
        <dbReference type="ChEBI" id="CHEBI:29034"/>
        <dbReference type="ChEBI" id="CHEBI:75028"/>
        <dbReference type="ChEBI" id="CHEBI:77290"/>
        <dbReference type="EC" id="1.14.19.77"/>
    </reaction>
    <physiologicalReaction direction="left-to-right" evidence="1">
        <dbReference type="Rhea" id="RHEA:22957"/>
    </physiologicalReaction>
</comment>
<comment type="catalytic activity">
    <reaction evidence="1">
        <text>a 1-O-hexadecyl-2-acyl-sn-glycero-3-phosphoethanolamine + 2 Fe(II)-[cytochrome b5] + O2 + 2 H(+) = a 1-O-(1Z-hexadecenyl)-2-acyl-sn-glycero-3-phosphoethanolamine + 2 Fe(III)-[cytochrome b5] + 2 H2O</text>
        <dbReference type="Rhea" id="RHEA:61960"/>
        <dbReference type="Rhea" id="RHEA-COMP:10438"/>
        <dbReference type="Rhea" id="RHEA-COMP:10439"/>
        <dbReference type="ChEBI" id="CHEBI:15377"/>
        <dbReference type="ChEBI" id="CHEBI:15378"/>
        <dbReference type="ChEBI" id="CHEBI:15379"/>
        <dbReference type="ChEBI" id="CHEBI:29033"/>
        <dbReference type="ChEBI" id="CHEBI:29034"/>
        <dbReference type="ChEBI" id="CHEBI:145181"/>
        <dbReference type="ChEBI" id="CHEBI:145186"/>
    </reaction>
    <physiologicalReaction direction="left-to-right" evidence="1">
        <dbReference type="Rhea" id="RHEA:61961"/>
    </physiologicalReaction>
</comment>
<comment type="catalytic activity">
    <reaction evidence="1">
        <text>a 1-O-octadecyl-2-acyl-sn-glycero-3-phosphoethanolamine + 2 Fe(II)-[cytochrome b5] + O2 + 2 H(+) = a 1-O-(1Z-octadecenyl)-2-acyl-sn-glycero-3-phosphoethanolamine + 2 Fe(III)-[cytochrome b5] + 2 H2O</text>
        <dbReference type="Rhea" id="RHEA:61964"/>
        <dbReference type="Rhea" id="RHEA-COMP:10438"/>
        <dbReference type="Rhea" id="RHEA-COMP:10439"/>
        <dbReference type="ChEBI" id="CHEBI:15377"/>
        <dbReference type="ChEBI" id="CHEBI:15378"/>
        <dbReference type="ChEBI" id="CHEBI:15379"/>
        <dbReference type="ChEBI" id="CHEBI:29033"/>
        <dbReference type="ChEBI" id="CHEBI:29034"/>
        <dbReference type="ChEBI" id="CHEBI:145182"/>
        <dbReference type="ChEBI" id="CHEBI:145187"/>
    </reaction>
    <physiologicalReaction direction="left-to-right" evidence="1">
        <dbReference type="Rhea" id="RHEA:61965"/>
    </physiologicalReaction>
</comment>
<comment type="catalytic activity">
    <reaction evidence="1">
        <text>a 1-O-(9Z-octadecenyl)-2-acyl-sn-glycero-3-phosphoethanolamine + 2 Fe(II)-[cytochrome b5] + O2 + 2 H(+) = a 1-O-(1Z,9Z-octadecadienyl)-2-acyl-sn-glycero-3-phosphoethanolamine + 2 Fe(III)-[cytochrome b5] + 2 H2O</text>
        <dbReference type="Rhea" id="RHEA:61968"/>
        <dbReference type="Rhea" id="RHEA-COMP:10438"/>
        <dbReference type="Rhea" id="RHEA-COMP:10439"/>
        <dbReference type="ChEBI" id="CHEBI:15377"/>
        <dbReference type="ChEBI" id="CHEBI:15378"/>
        <dbReference type="ChEBI" id="CHEBI:15379"/>
        <dbReference type="ChEBI" id="CHEBI:29033"/>
        <dbReference type="ChEBI" id="CHEBI:29034"/>
        <dbReference type="ChEBI" id="CHEBI:145183"/>
        <dbReference type="ChEBI" id="CHEBI:145188"/>
    </reaction>
    <physiologicalReaction direction="left-to-right" evidence="1">
        <dbReference type="Rhea" id="RHEA:61969"/>
    </physiologicalReaction>
</comment>
<comment type="pathway">
    <text evidence="1">Lipid metabolism; fatty acid metabolism.</text>
</comment>
<comment type="subcellular location">
    <subcellularLocation>
        <location evidence="1">Endoplasmic reticulum membrane</location>
        <topology evidence="3">Multi-pass membrane protein</topology>
    </subcellularLocation>
</comment>
<comment type="domain">
    <text evidence="1">Histidine box-1 and -2 together with other histidine residues are essential for catalytic activity.</text>
</comment>
<comment type="similarity">
    <text evidence="4">Belongs to the fatty acid desaturase CarF family.</text>
</comment>
<dbReference type="EC" id="1.14.19.77" evidence="1"/>
<dbReference type="EMBL" id="BC148012">
    <property type="protein sequence ID" value="AAI48013.1"/>
    <property type="molecule type" value="mRNA"/>
</dbReference>
<dbReference type="RefSeq" id="NP_001093785.1">
    <property type="nucleotide sequence ID" value="NM_001100315.1"/>
</dbReference>
<dbReference type="FunCoup" id="A6QLM0">
    <property type="interactions" value="881"/>
</dbReference>
<dbReference type="STRING" id="9913.ENSBTAP00000013376"/>
<dbReference type="PaxDb" id="9913-ENSBTAP00000013376"/>
<dbReference type="Ensembl" id="ENSBTAT00000013376.7">
    <property type="protein sequence ID" value="ENSBTAP00000013376.6"/>
    <property type="gene ID" value="ENSBTAG00000010135.7"/>
</dbReference>
<dbReference type="GeneID" id="507694"/>
<dbReference type="KEGG" id="bta:507694"/>
<dbReference type="CTD" id="387521"/>
<dbReference type="VEuPathDB" id="HostDB:ENSBTAG00000010135"/>
<dbReference type="VGNC" id="VGNC:57030">
    <property type="gene designation" value="PEDS1"/>
</dbReference>
<dbReference type="eggNOG" id="KOG3011">
    <property type="taxonomic scope" value="Eukaryota"/>
</dbReference>
<dbReference type="GeneTree" id="ENSGT00940000162354"/>
<dbReference type="HOGENOM" id="CLU_065233_1_1_1"/>
<dbReference type="InParanoid" id="A6QLM0"/>
<dbReference type="OMA" id="CITNGWL"/>
<dbReference type="OrthoDB" id="5103at2759"/>
<dbReference type="UniPathway" id="UPA00199"/>
<dbReference type="Proteomes" id="UP000009136">
    <property type="component" value="Chromosome 13"/>
</dbReference>
<dbReference type="Bgee" id="ENSBTAG00000010135">
    <property type="expression patterns" value="Expressed in floor plate of diencephalon and 104 other cell types or tissues"/>
</dbReference>
<dbReference type="GO" id="GO:0005789">
    <property type="term" value="C:endoplasmic reticulum membrane"/>
    <property type="evidence" value="ECO:0000250"/>
    <property type="project" value="UniProtKB"/>
</dbReference>
<dbReference type="GO" id="GO:0050207">
    <property type="term" value="F:plasmanylethanolamine desaturase activity"/>
    <property type="evidence" value="ECO:0000250"/>
    <property type="project" value="UniProtKB"/>
</dbReference>
<dbReference type="GO" id="GO:0008611">
    <property type="term" value="P:ether lipid biosynthetic process"/>
    <property type="evidence" value="ECO:0000250"/>
    <property type="project" value="UniProtKB"/>
</dbReference>
<dbReference type="GO" id="GO:0006631">
    <property type="term" value="P:fatty acid metabolic process"/>
    <property type="evidence" value="ECO:0007669"/>
    <property type="project" value="UniProtKB-UniPathway"/>
</dbReference>
<dbReference type="InterPro" id="IPR019547">
    <property type="entry name" value="Lipid_desat"/>
</dbReference>
<dbReference type="InterPro" id="IPR052601">
    <property type="entry name" value="Plasmalogen_desaturase"/>
</dbReference>
<dbReference type="PANTHER" id="PTHR48177:SF1">
    <property type="entry name" value="PLASMANYLETHANOLAMINE DESATURASE 1"/>
    <property type="match status" value="1"/>
</dbReference>
<dbReference type="PANTHER" id="PTHR48177">
    <property type="entry name" value="TRANSMEMBRANE PROTEIN 189"/>
    <property type="match status" value="1"/>
</dbReference>
<dbReference type="Pfam" id="PF10520">
    <property type="entry name" value="Lipid_desat"/>
    <property type="match status" value="1"/>
</dbReference>
<reference evidence="5" key="1">
    <citation type="submission" date="2007-06" db="EMBL/GenBank/DDBJ databases">
        <authorList>
            <consortium name="NIH - Mammalian Gene Collection (MGC) project"/>
        </authorList>
    </citation>
    <scope>NUCLEOTIDE SEQUENCE [LARGE SCALE MRNA]</scope>
    <source>
        <strain evidence="5">Hereford</strain>
        <tissue evidence="5">Basal ganglia</tissue>
    </source>
</reference>
<keyword id="KW-0256">Endoplasmic reticulum</keyword>
<keyword id="KW-0276">Fatty acid metabolism</keyword>
<keyword id="KW-0443">Lipid metabolism</keyword>
<keyword id="KW-0472">Membrane</keyword>
<keyword id="KW-0560">Oxidoreductase</keyword>
<keyword id="KW-1185">Reference proteome</keyword>
<keyword id="KW-0812">Transmembrane</keyword>
<keyword id="KW-1133">Transmembrane helix</keyword>
<proteinExistence type="evidence at transcript level"/>
<name>PEDS1_BOVIN</name>
<evidence type="ECO:0000250" key="1">
    <source>
        <dbReference type="UniProtKB" id="A5PLL7"/>
    </source>
</evidence>
<evidence type="ECO:0000250" key="2">
    <source>
        <dbReference type="UniProtKB" id="Q99LQ7"/>
    </source>
</evidence>
<evidence type="ECO:0000255" key="3"/>
<evidence type="ECO:0000305" key="4"/>
<evidence type="ECO:0000312" key="5">
    <source>
        <dbReference type="EMBL" id="AAI48013.1"/>
    </source>
</evidence>
<organism>
    <name type="scientific">Bos taurus</name>
    <name type="common">Bovine</name>
    <dbReference type="NCBI Taxonomy" id="9913"/>
    <lineage>
        <taxon>Eukaryota</taxon>
        <taxon>Metazoa</taxon>
        <taxon>Chordata</taxon>
        <taxon>Craniata</taxon>
        <taxon>Vertebrata</taxon>
        <taxon>Euteleostomi</taxon>
        <taxon>Mammalia</taxon>
        <taxon>Eutheria</taxon>
        <taxon>Laurasiatheria</taxon>
        <taxon>Artiodactyla</taxon>
        <taxon>Ruminantia</taxon>
        <taxon>Pecora</taxon>
        <taxon>Bovidae</taxon>
        <taxon>Bovinae</taxon>
        <taxon>Bos</taxon>
    </lineage>
</organism>
<feature type="chain" id="PRO_0000319992" description="Plasmanylethanolamine desaturase 1">
    <location>
        <begin position="1"/>
        <end position="271"/>
    </location>
</feature>
<feature type="transmembrane region" description="Helical" evidence="3">
    <location>
        <begin position="48"/>
        <end position="68"/>
    </location>
</feature>
<feature type="transmembrane region" description="Helical" evidence="3">
    <location>
        <begin position="75"/>
        <end position="95"/>
    </location>
</feature>
<feature type="transmembrane region" description="Helical" evidence="3">
    <location>
        <begin position="162"/>
        <end position="182"/>
    </location>
</feature>
<feature type="short sequence motif" description="Histidine box-1" evidence="1">
    <location>
        <begin position="187"/>
        <end position="191"/>
    </location>
</feature>
<feature type="short sequence motif" description="Histidine box-2" evidence="1">
    <location>
        <begin position="214"/>
        <end position="218"/>
    </location>
</feature>
<feature type="site" description="Essential for catalytic activity" evidence="1">
    <location>
        <position position="96"/>
    </location>
</feature>
<feature type="site" description="Essential for catalytic activity" evidence="1">
    <location>
        <position position="121"/>
    </location>
</feature>
<feature type="site" description="Essential for catalytic activity" evidence="1">
    <location>
        <position position="122"/>
    </location>
</feature>
<feature type="site" description="Essential for catalytic activity" evidence="2">
    <location>
        <position position="187"/>
    </location>
</feature>
<feature type="site" description="Essential for catalytic activity" evidence="2">
    <location>
        <position position="191"/>
    </location>
</feature>
<feature type="site" description="Essential for catalytic activity" evidence="2">
    <location>
        <position position="215"/>
    </location>
</feature>
<feature type="site" description="Essential for catalytic activity" evidence="2">
    <location>
        <position position="218"/>
    </location>
</feature>
<feature type="site" description="Essential for catalytic activity" evidence="2">
    <location>
        <position position="219"/>
    </location>
</feature>
<protein>
    <recommendedName>
        <fullName evidence="1">Plasmanylethanolamine desaturase 1</fullName>
        <ecNumber evidence="1">1.14.19.77</ecNumber>
    </recommendedName>
    <alternativeName>
        <fullName evidence="1">Transmembrane protein 189</fullName>
    </alternativeName>
</protein>
<accession>A6QLM0</accession>